<protein>
    <recommendedName>
        <fullName>Phosphoprotein</fullName>
        <shortName>Protein P</shortName>
    </recommendedName>
</protein>
<name>PHOSP_HRSVB</name>
<sequence>MEKFAPEFHGEDANNKATKFLESIKGKFASSKDPKKKDSIISVNSIDIEVTKESPITSGTNIINPTSEADSTPETKANYPRKPLVSFKEDLTPSDNPFSKLYKETIETFDNNEEESSYSYEEINDQTNDNITARLDRIDEKLSEILGMLHTLVVASAGPTSARDGIRDAMVGLREEMIEKIRAEALMTNDRLEAMARLRNEESEKMAKDTSDEVPLNPTSKKLSDLLEDNDSDNDLSLDDF</sequence>
<accession>O42062</accession>
<feature type="chain" id="PRO_0000365783" description="Phosphoprotein">
    <location>
        <begin position="1"/>
        <end position="241"/>
    </location>
</feature>
<feature type="region of interest" description="Binding to monomeric RNA-free nucleoprotein" evidence="1">
    <location>
        <begin position="1"/>
        <end position="30"/>
    </location>
</feature>
<feature type="region of interest" description="Important for viral particle assembly" evidence="1">
    <location>
        <begin position="39"/>
        <end position="57"/>
    </location>
</feature>
<feature type="region of interest" description="Disordered" evidence="2">
    <location>
        <begin position="53"/>
        <end position="79"/>
    </location>
</feature>
<feature type="region of interest" description="Binding to host phosphatase PP1" evidence="1">
    <location>
        <begin position="81"/>
        <end position="87"/>
    </location>
</feature>
<feature type="region of interest" description="Binding to protein M2-1" evidence="1">
    <location>
        <begin position="90"/>
        <end position="110"/>
    </location>
</feature>
<feature type="region of interest" description="Oligomerization and binding to RNA-directed RNA polymerase L" evidence="1">
    <location>
        <begin position="120"/>
        <end position="160"/>
    </location>
</feature>
<feature type="region of interest" description="Disordered" evidence="2">
    <location>
        <begin position="200"/>
        <end position="241"/>
    </location>
</feature>
<feature type="region of interest" description="Binding to RNA-directed RNA polymerase L" evidence="1">
    <location>
        <begin position="216"/>
        <end position="232"/>
    </location>
</feature>
<feature type="region of interest" description="Binding to the N-RNA complex" evidence="1">
    <location>
        <begin position="232"/>
        <end position="241"/>
    </location>
</feature>
<feature type="compositionally biased region" description="Polar residues" evidence="2">
    <location>
        <begin position="54"/>
        <end position="75"/>
    </location>
</feature>
<feature type="compositionally biased region" description="Basic and acidic residues" evidence="2">
    <location>
        <begin position="200"/>
        <end position="211"/>
    </location>
</feature>
<feature type="compositionally biased region" description="Acidic residues" evidence="2">
    <location>
        <begin position="226"/>
        <end position="241"/>
    </location>
</feature>
<feature type="site" description="Interaction with protein M2-1" evidence="1">
    <location>
        <position position="108"/>
    </location>
</feature>
<feature type="modified residue" description="Phosphothreonine; by host" evidence="1">
    <location>
        <position position="108"/>
    </location>
</feature>
<feature type="modified residue" description="Phosphoserine; by host" evidence="1">
    <location>
        <position position="116"/>
    </location>
</feature>
<feature type="modified residue" description="Phosphoserine; by host" evidence="1">
    <location>
        <position position="117"/>
    </location>
</feature>
<feature type="modified residue" description="Phosphoserine; by host" evidence="1">
    <location>
        <position position="119"/>
    </location>
</feature>
<feature type="modified residue" description="Phosphoserine; by host" evidence="1">
    <location>
        <position position="232"/>
    </location>
</feature>
<feature type="modified residue" description="Phosphoserine; by host" evidence="1">
    <location>
        <position position="237"/>
    </location>
</feature>
<evidence type="ECO:0000250" key="1">
    <source>
        <dbReference type="UniProtKB" id="P03421"/>
    </source>
</evidence>
<evidence type="ECO:0000256" key="2">
    <source>
        <dbReference type="SAM" id="MobiDB-lite"/>
    </source>
</evidence>
<evidence type="ECO:0000305" key="3"/>
<reference key="1">
    <citation type="journal article" date="1997" name="Proc. Natl. Acad. Sci. U.S.A.">
        <title>Respiratory syncytial virus (RSV) SH and G proteins are not essential for viral replication in vitro: clinical evaluation and molecular characterization of a cold-passaged, attenuated RSV subgroup B mutant.</title>
        <authorList>
            <person name="Karron R.A."/>
            <person name="Buonagurio D.A."/>
            <person name="Georgiu A.F."/>
            <person name="Whitehead S.S."/>
            <person name="Adamus J.E."/>
            <person name="Clements-Mann M.L."/>
            <person name="Harris D.O."/>
            <person name="Randolph V.B."/>
            <person name="Udem S.A."/>
            <person name="Murphy B.R."/>
            <person name="Sidhu M.S."/>
        </authorList>
    </citation>
    <scope>NUCLEOTIDE SEQUENCE [GENOMIC RNA]</scope>
    <source>
        <strain>B1</strain>
    </source>
</reference>
<proteinExistence type="inferred from homology"/>
<organismHost>
    <name type="scientific">Homo sapiens</name>
    <name type="common">Human</name>
    <dbReference type="NCBI Taxonomy" id="9606"/>
</organismHost>
<keyword id="KW-1035">Host cytoplasm</keyword>
<keyword id="KW-0945">Host-virus interaction</keyword>
<keyword id="KW-1100">Inhibition of host NF-kappa-B by virus</keyword>
<keyword id="KW-0597">Phosphoprotein</keyword>
<keyword id="KW-1185">Reference proteome</keyword>
<keyword id="KW-0693">Viral RNA replication</keyword>
<keyword id="KW-0946">Virion</keyword>
<gene>
    <name type="primary">P</name>
</gene>
<organism>
    <name type="scientific">Human respiratory syncytial virus B (strain B1)</name>
    <dbReference type="NCBI Taxonomy" id="79692"/>
    <lineage>
        <taxon>Viruses</taxon>
        <taxon>Riboviria</taxon>
        <taxon>Orthornavirae</taxon>
        <taxon>Negarnaviricota</taxon>
        <taxon>Haploviricotina</taxon>
        <taxon>Monjiviricetes</taxon>
        <taxon>Mononegavirales</taxon>
        <taxon>Pneumoviridae</taxon>
        <taxon>Orthopneumovirus</taxon>
        <taxon>Orthopneumovirus hominis</taxon>
    </lineage>
</organism>
<comment type="function">
    <text evidence="1">Plays critical roles in regulating RNA replication and transcription through its interactions with multiple proteins. Tethers the RNA-directed RNA polymerase L to the nucleoprotein-RNA complex. Recruits the M2-1 protein, a processivity factor that is required for efficient transcription of viral RNA. Acts as a chaperone for neo-synthesized nucleoprotein by forming an N-P complex that preserves N in a monomeric and RNA-free state and prevents the association of nascent N with host cell RNAs. Recruits the host phosphatase PP1 to inclusion bodies to regulate viral transcription. Together with the nucleoprotein, sequesters host NF-kappa-B in inclusion bodies (IBs) thereby inhibiting this host defense pathway.</text>
</comment>
<comment type="subunit">
    <text evidence="1">Homotetramer. Interacts with protein M2-1; the interaction between the two tetramers is required for the anti-termination and elongation transcriptional activities of protein M2-1. Interacts with host phosphatase PP1; this interaction recruits PP1 to the inclusion bodies. Formation of a complex PP1/M2-1/P allows P to target host PP1 phosphatase to the M2-1 substrate. Interacts (via C-terminus) with the nucleoprotein N (via N-terminus); the phosphorylated phosphoprotein P binds to N-RNA complex. Interacts (via N-terminus) with the monomeric RNA-free nucleoprotein N. Interacts (via C-terminus) with RNA-directed RNA polymerase L; the association of P and L forms the polymerase complex.</text>
</comment>
<comment type="subcellular location">
    <subcellularLocation>
        <location evidence="1">Virion</location>
    </subcellularLocation>
    <subcellularLocation>
        <location evidence="1">Host cytoplasm</location>
    </subcellularLocation>
    <text evidence="1">Localizes in cytoplasmic inclusion bodies.</text>
</comment>
<comment type="domain">
    <text evidence="1">The N-terminus is important for viral particle assembly. The oligomerization region is central. The C-terminus part contains binding regions for the RNA-directed RNA polymerase L and the nucleoprotein.</text>
</comment>
<comment type="PTM">
    <text evidence="1">Constitutively phosphorylated by host. Phosphorylation at S-116, S-117, S-119, S-232 and S-237 is required for transcription inhibition by M2-2 and viral particle egress. Phosphorylation at S-232 and S-237 increases the affinity of the binding to the nucleoprotein.</text>
</comment>
<comment type="similarity">
    <text evidence="3">Belongs to the pneumoviridae phosphoprotein P family.</text>
</comment>
<dbReference type="EMBL" id="AF013254">
    <property type="protein sequence ID" value="AAB82432.1"/>
    <property type="molecule type" value="Genomic_RNA"/>
</dbReference>
<dbReference type="EMBL" id="AF013255">
    <property type="protein sequence ID" value="AAB82443.1"/>
    <property type="molecule type" value="Genomic_RNA"/>
</dbReference>
<dbReference type="RefSeq" id="NP_056859.1">
    <property type="nucleotide sequence ID" value="NC_001781.1"/>
</dbReference>
<dbReference type="SMR" id="O42062"/>
<dbReference type="GeneID" id="1489821"/>
<dbReference type="KEGG" id="vg:1489821"/>
<dbReference type="Proteomes" id="UP000002472">
    <property type="component" value="Segment"/>
</dbReference>
<dbReference type="Proteomes" id="UP000180717">
    <property type="component" value="Genome"/>
</dbReference>
<dbReference type="GO" id="GO:0030430">
    <property type="term" value="C:host cell cytoplasm"/>
    <property type="evidence" value="ECO:0007669"/>
    <property type="project" value="UniProtKB-SubCell"/>
</dbReference>
<dbReference type="GO" id="GO:0044423">
    <property type="term" value="C:virion component"/>
    <property type="evidence" value="ECO:0007669"/>
    <property type="project" value="UniProtKB-KW"/>
</dbReference>
<dbReference type="GO" id="GO:0003968">
    <property type="term" value="F:RNA-directed RNA polymerase activity"/>
    <property type="evidence" value="ECO:0007669"/>
    <property type="project" value="InterPro"/>
</dbReference>
<dbReference type="GO" id="GO:0085034">
    <property type="term" value="P:symbiont-mediated suppression of host NF-kappaB cascade"/>
    <property type="evidence" value="ECO:0007669"/>
    <property type="project" value="UniProtKB-KW"/>
</dbReference>
<dbReference type="InterPro" id="IPR018247">
    <property type="entry name" value="EF_Hand_1_Ca_BS"/>
</dbReference>
<dbReference type="InterPro" id="IPR003487">
    <property type="entry name" value="Pprotein_pneumovir"/>
</dbReference>
<dbReference type="Pfam" id="PF02478">
    <property type="entry name" value="Pneumo_phosprot"/>
    <property type="match status" value="1"/>
</dbReference>
<dbReference type="PROSITE" id="PS00018">
    <property type="entry name" value="EF_HAND_1"/>
    <property type="match status" value="1"/>
</dbReference>